<organism>
    <name type="scientific">Azotobacter vinelandii (strain DJ / ATCC BAA-1303)</name>
    <dbReference type="NCBI Taxonomy" id="322710"/>
    <lineage>
        <taxon>Bacteria</taxon>
        <taxon>Pseudomonadati</taxon>
        <taxon>Pseudomonadota</taxon>
        <taxon>Gammaproteobacteria</taxon>
        <taxon>Pseudomonadales</taxon>
        <taxon>Pseudomonadaceae</taxon>
        <taxon>Azotobacter</taxon>
    </lineage>
</organism>
<name>GRPE_AZOVD</name>
<reference key="1">
    <citation type="journal article" date="2009" name="J. Bacteriol.">
        <title>Genome sequence of Azotobacter vinelandii, an obligate aerobe specialized to support diverse anaerobic metabolic processes.</title>
        <authorList>
            <person name="Setubal J.C."/>
            <person name="Dos Santos P."/>
            <person name="Goldman B.S."/>
            <person name="Ertesvaag H."/>
            <person name="Espin G."/>
            <person name="Rubio L.M."/>
            <person name="Valla S."/>
            <person name="Almeida N.F."/>
            <person name="Balasubramanian D."/>
            <person name="Cromes L."/>
            <person name="Curatti L."/>
            <person name="Du Z."/>
            <person name="Godsy E."/>
            <person name="Goodner B."/>
            <person name="Hellner-Burris K."/>
            <person name="Hernandez J.A."/>
            <person name="Houmiel K."/>
            <person name="Imperial J."/>
            <person name="Kennedy C."/>
            <person name="Larson T.J."/>
            <person name="Latreille P."/>
            <person name="Ligon L.S."/>
            <person name="Lu J."/>
            <person name="Maerk M."/>
            <person name="Miller N.M."/>
            <person name="Norton S."/>
            <person name="O'Carroll I.P."/>
            <person name="Paulsen I."/>
            <person name="Raulfs E.C."/>
            <person name="Roemer R."/>
            <person name="Rosser J."/>
            <person name="Segura D."/>
            <person name="Slater S."/>
            <person name="Stricklin S.L."/>
            <person name="Studholme D.J."/>
            <person name="Sun J."/>
            <person name="Viana C.J."/>
            <person name="Wallin E."/>
            <person name="Wang B."/>
            <person name="Wheeler C."/>
            <person name="Zhu H."/>
            <person name="Dean D.R."/>
            <person name="Dixon R."/>
            <person name="Wood D."/>
        </authorList>
    </citation>
    <scope>NUCLEOTIDE SEQUENCE [LARGE SCALE GENOMIC DNA]</scope>
    <source>
        <strain>DJ / ATCC BAA-1303</strain>
    </source>
</reference>
<gene>
    <name evidence="1" type="primary">grpE</name>
    <name type="ordered locus">Avin_42980</name>
</gene>
<proteinExistence type="inferred from homology"/>
<keyword id="KW-0143">Chaperone</keyword>
<keyword id="KW-0963">Cytoplasm</keyword>
<keyword id="KW-0346">Stress response</keyword>
<evidence type="ECO:0000255" key="1">
    <source>
        <dbReference type="HAMAP-Rule" id="MF_01151"/>
    </source>
</evidence>
<evidence type="ECO:0000256" key="2">
    <source>
        <dbReference type="SAM" id="MobiDB-lite"/>
    </source>
</evidence>
<protein>
    <recommendedName>
        <fullName evidence="1">Protein GrpE</fullName>
    </recommendedName>
    <alternativeName>
        <fullName evidence="1">HSP-70 cofactor</fullName>
    </alternativeName>
</protein>
<dbReference type="EMBL" id="CP001157">
    <property type="protein sequence ID" value="ACO80420.1"/>
    <property type="molecule type" value="Genomic_DNA"/>
</dbReference>
<dbReference type="RefSeq" id="WP_012702788.1">
    <property type="nucleotide sequence ID" value="NC_012560.1"/>
</dbReference>
<dbReference type="SMR" id="C1DFM4"/>
<dbReference type="STRING" id="322710.Avin_42980"/>
<dbReference type="EnsemblBacteria" id="ACO80420">
    <property type="protein sequence ID" value="ACO80420"/>
    <property type="gene ID" value="Avin_42980"/>
</dbReference>
<dbReference type="GeneID" id="88187213"/>
<dbReference type="KEGG" id="avn:Avin_42980"/>
<dbReference type="eggNOG" id="COG0576">
    <property type="taxonomic scope" value="Bacteria"/>
</dbReference>
<dbReference type="HOGENOM" id="CLU_057217_6_0_6"/>
<dbReference type="OrthoDB" id="9789811at2"/>
<dbReference type="Proteomes" id="UP000002424">
    <property type="component" value="Chromosome"/>
</dbReference>
<dbReference type="GO" id="GO:0005829">
    <property type="term" value="C:cytosol"/>
    <property type="evidence" value="ECO:0007669"/>
    <property type="project" value="TreeGrafter"/>
</dbReference>
<dbReference type="GO" id="GO:0000774">
    <property type="term" value="F:adenyl-nucleotide exchange factor activity"/>
    <property type="evidence" value="ECO:0007669"/>
    <property type="project" value="InterPro"/>
</dbReference>
<dbReference type="GO" id="GO:0042803">
    <property type="term" value="F:protein homodimerization activity"/>
    <property type="evidence" value="ECO:0007669"/>
    <property type="project" value="InterPro"/>
</dbReference>
<dbReference type="GO" id="GO:0051087">
    <property type="term" value="F:protein-folding chaperone binding"/>
    <property type="evidence" value="ECO:0007669"/>
    <property type="project" value="InterPro"/>
</dbReference>
<dbReference type="GO" id="GO:0051082">
    <property type="term" value="F:unfolded protein binding"/>
    <property type="evidence" value="ECO:0007669"/>
    <property type="project" value="TreeGrafter"/>
</dbReference>
<dbReference type="GO" id="GO:0006457">
    <property type="term" value="P:protein folding"/>
    <property type="evidence" value="ECO:0007669"/>
    <property type="project" value="InterPro"/>
</dbReference>
<dbReference type="CDD" id="cd00446">
    <property type="entry name" value="GrpE"/>
    <property type="match status" value="1"/>
</dbReference>
<dbReference type="FunFam" id="2.30.22.10:FF:000001">
    <property type="entry name" value="Protein GrpE"/>
    <property type="match status" value="1"/>
</dbReference>
<dbReference type="Gene3D" id="3.90.20.20">
    <property type="match status" value="1"/>
</dbReference>
<dbReference type="Gene3D" id="2.30.22.10">
    <property type="entry name" value="Head domain of nucleotide exchange factor GrpE"/>
    <property type="match status" value="1"/>
</dbReference>
<dbReference type="HAMAP" id="MF_01151">
    <property type="entry name" value="GrpE"/>
    <property type="match status" value="1"/>
</dbReference>
<dbReference type="InterPro" id="IPR000740">
    <property type="entry name" value="GrpE"/>
</dbReference>
<dbReference type="InterPro" id="IPR013805">
    <property type="entry name" value="GrpE_coiled_coil"/>
</dbReference>
<dbReference type="InterPro" id="IPR009012">
    <property type="entry name" value="GrpE_head"/>
</dbReference>
<dbReference type="NCBIfam" id="NF010737">
    <property type="entry name" value="PRK14139.1"/>
    <property type="match status" value="1"/>
</dbReference>
<dbReference type="NCBIfam" id="NF010738">
    <property type="entry name" value="PRK14140.1"/>
    <property type="match status" value="1"/>
</dbReference>
<dbReference type="NCBIfam" id="NF010748">
    <property type="entry name" value="PRK14150.1"/>
    <property type="match status" value="1"/>
</dbReference>
<dbReference type="NCBIfam" id="NF010749">
    <property type="entry name" value="PRK14151.1"/>
    <property type="match status" value="1"/>
</dbReference>
<dbReference type="PANTHER" id="PTHR21237">
    <property type="entry name" value="GRPE PROTEIN"/>
    <property type="match status" value="1"/>
</dbReference>
<dbReference type="PANTHER" id="PTHR21237:SF23">
    <property type="entry name" value="GRPE PROTEIN HOMOLOG, MITOCHONDRIAL"/>
    <property type="match status" value="1"/>
</dbReference>
<dbReference type="Pfam" id="PF01025">
    <property type="entry name" value="GrpE"/>
    <property type="match status" value="1"/>
</dbReference>
<dbReference type="PRINTS" id="PR00773">
    <property type="entry name" value="GRPEPROTEIN"/>
</dbReference>
<dbReference type="SUPFAM" id="SSF58014">
    <property type="entry name" value="Coiled-coil domain of nucleotide exchange factor GrpE"/>
    <property type="match status" value="1"/>
</dbReference>
<dbReference type="SUPFAM" id="SSF51064">
    <property type="entry name" value="Head domain of nucleotide exchange factor GrpE"/>
    <property type="match status" value="1"/>
</dbReference>
<dbReference type="PROSITE" id="PS01071">
    <property type="entry name" value="GRPE"/>
    <property type="match status" value="1"/>
</dbReference>
<comment type="function">
    <text evidence="1">Participates actively in the response to hyperosmotic and heat shock by preventing the aggregation of stress-denatured proteins, in association with DnaK and GrpE. It is the nucleotide exchange factor for DnaK and may function as a thermosensor. Unfolded proteins bind initially to DnaJ; upon interaction with the DnaJ-bound protein, DnaK hydrolyzes its bound ATP, resulting in the formation of a stable complex. GrpE releases ADP from DnaK; ATP binding to DnaK triggers the release of the substrate protein, thus completing the reaction cycle. Several rounds of ATP-dependent interactions between DnaJ, DnaK and GrpE are required for fully efficient folding.</text>
</comment>
<comment type="subunit">
    <text evidence="1">Homodimer.</text>
</comment>
<comment type="subcellular location">
    <subcellularLocation>
        <location evidence="1">Cytoplasm</location>
    </subcellularLocation>
</comment>
<comment type="similarity">
    <text evidence="1">Belongs to the GrpE family.</text>
</comment>
<feature type="chain" id="PRO_1000213665" description="Protein GrpE">
    <location>
        <begin position="1"/>
        <end position="187"/>
    </location>
</feature>
<feature type="region of interest" description="Disordered" evidence="2">
    <location>
        <begin position="1"/>
        <end position="25"/>
    </location>
</feature>
<accession>C1DFM4</accession>
<sequence>MADEQNLDNRAPEETPAAEGTSAGEDLAARVQALEEQLAAAQDQALRAAAELQNVRRRAEQDVEKAHKFALERFAQDLLGVVDSLERGIELSDPADESIRPMREGMELTLKMFHDVLRRYQLEQLDPHGEPFNPEHHQAMAMEESDSAEPGSVLKVFQKGYLLSGRLLRPAMVVVSKAPTPSNDEQA</sequence>